<protein>
    <recommendedName>
        <fullName evidence="1">Acyl-[acyl-carrier-protein]--UDP-N-acetylglucosamine O-acyltransferase</fullName>
        <shortName evidence="1">UDP-N-acetylglucosamine acyltransferase</shortName>
        <ecNumber evidence="1">2.3.1.129</ecNumber>
    </recommendedName>
</protein>
<organism>
    <name type="scientific">Mannheimia succiniciproducens (strain KCTC 0769BP / MBEL55E)</name>
    <dbReference type="NCBI Taxonomy" id="221988"/>
    <lineage>
        <taxon>Bacteria</taxon>
        <taxon>Pseudomonadati</taxon>
        <taxon>Pseudomonadota</taxon>
        <taxon>Gammaproteobacteria</taxon>
        <taxon>Pasteurellales</taxon>
        <taxon>Pasteurellaceae</taxon>
        <taxon>Basfia</taxon>
    </lineage>
</organism>
<proteinExistence type="inferred from homology"/>
<dbReference type="EC" id="2.3.1.129" evidence="1"/>
<dbReference type="EMBL" id="AE016827">
    <property type="protein sequence ID" value="AAU37068.1"/>
    <property type="molecule type" value="Genomic_DNA"/>
</dbReference>
<dbReference type="RefSeq" id="WP_011199643.1">
    <property type="nucleotide sequence ID" value="NC_006300.1"/>
</dbReference>
<dbReference type="SMR" id="Q65VE2"/>
<dbReference type="STRING" id="221988.MS0461"/>
<dbReference type="KEGG" id="msu:MS0461"/>
<dbReference type="eggNOG" id="COG1043">
    <property type="taxonomic scope" value="Bacteria"/>
</dbReference>
<dbReference type="HOGENOM" id="CLU_061249_0_0_6"/>
<dbReference type="OrthoDB" id="9807278at2"/>
<dbReference type="UniPathway" id="UPA00359">
    <property type="reaction ID" value="UER00477"/>
</dbReference>
<dbReference type="Proteomes" id="UP000000607">
    <property type="component" value="Chromosome"/>
</dbReference>
<dbReference type="GO" id="GO:0005737">
    <property type="term" value="C:cytoplasm"/>
    <property type="evidence" value="ECO:0007669"/>
    <property type="project" value="UniProtKB-SubCell"/>
</dbReference>
<dbReference type="GO" id="GO:0016020">
    <property type="term" value="C:membrane"/>
    <property type="evidence" value="ECO:0007669"/>
    <property type="project" value="GOC"/>
</dbReference>
<dbReference type="GO" id="GO:0008780">
    <property type="term" value="F:acyl-[acyl-carrier-protein]-UDP-N-acetylglucosamine O-acyltransferase activity"/>
    <property type="evidence" value="ECO:0007669"/>
    <property type="project" value="UniProtKB-UniRule"/>
</dbReference>
<dbReference type="GO" id="GO:0009245">
    <property type="term" value="P:lipid A biosynthetic process"/>
    <property type="evidence" value="ECO:0007669"/>
    <property type="project" value="UniProtKB-UniRule"/>
</dbReference>
<dbReference type="CDD" id="cd03351">
    <property type="entry name" value="LbH_UDP-GlcNAc_AT"/>
    <property type="match status" value="1"/>
</dbReference>
<dbReference type="FunFam" id="2.160.10.10:FF:000003">
    <property type="entry name" value="Acyl-[acyl-carrier-protein]--UDP-N-acetylglucosamine O-acyltransferase"/>
    <property type="match status" value="1"/>
</dbReference>
<dbReference type="Gene3D" id="2.160.10.10">
    <property type="entry name" value="Hexapeptide repeat proteins"/>
    <property type="match status" value="1"/>
</dbReference>
<dbReference type="Gene3D" id="1.20.1180.10">
    <property type="entry name" value="Udp N-acetylglucosamine O-acyltransferase, C-terminal domain"/>
    <property type="match status" value="1"/>
</dbReference>
<dbReference type="HAMAP" id="MF_00387">
    <property type="entry name" value="LpxA"/>
    <property type="match status" value="1"/>
</dbReference>
<dbReference type="InterPro" id="IPR029098">
    <property type="entry name" value="Acetyltransf_C"/>
</dbReference>
<dbReference type="InterPro" id="IPR037157">
    <property type="entry name" value="Acetyltransf_C_sf"/>
</dbReference>
<dbReference type="InterPro" id="IPR001451">
    <property type="entry name" value="Hexapep"/>
</dbReference>
<dbReference type="InterPro" id="IPR018357">
    <property type="entry name" value="Hexapep_transf_CS"/>
</dbReference>
<dbReference type="InterPro" id="IPR010137">
    <property type="entry name" value="Lipid_A_LpxA"/>
</dbReference>
<dbReference type="InterPro" id="IPR011004">
    <property type="entry name" value="Trimer_LpxA-like_sf"/>
</dbReference>
<dbReference type="NCBIfam" id="TIGR01852">
    <property type="entry name" value="lipid_A_lpxA"/>
    <property type="match status" value="1"/>
</dbReference>
<dbReference type="NCBIfam" id="NF003657">
    <property type="entry name" value="PRK05289.1"/>
    <property type="match status" value="1"/>
</dbReference>
<dbReference type="PANTHER" id="PTHR43480">
    <property type="entry name" value="ACYL-[ACYL-CARRIER-PROTEIN]--UDP-N-ACETYLGLUCOSAMINE O-ACYLTRANSFERASE"/>
    <property type="match status" value="1"/>
</dbReference>
<dbReference type="PANTHER" id="PTHR43480:SF1">
    <property type="entry name" value="ACYL-[ACYL-CARRIER-PROTEIN]--UDP-N-ACETYLGLUCOSAMINE O-ACYLTRANSFERASE, MITOCHONDRIAL-RELATED"/>
    <property type="match status" value="1"/>
</dbReference>
<dbReference type="Pfam" id="PF13720">
    <property type="entry name" value="Acetyltransf_11"/>
    <property type="match status" value="1"/>
</dbReference>
<dbReference type="Pfam" id="PF00132">
    <property type="entry name" value="Hexapep"/>
    <property type="match status" value="2"/>
</dbReference>
<dbReference type="PIRSF" id="PIRSF000456">
    <property type="entry name" value="UDP-GlcNAc_acltr"/>
    <property type="match status" value="1"/>
</dbReference>
<dbReference type="SUPFAM" id="SSF51161">
    <property type="entry name" value="Trimeric LpxA-like enzymes"/>
    <property type="match status" value="1"/>
</dbReference>
<dbReference type="PROSITE" id="PS00101">
    <property type="entry name" value="HEXAPEP_TRANSFERASES"/>
    <property type="match status" value="3"/>
</dbReference>
<accession>Q65VE2</accession>
<evidence type="ECO:0000255" key="1">
    <source>
        <dbReference type="HAMAP-Rule" id="MF_00387"/>
    </source>
</evidence>
<feature type="chain" id="PRO_0000302581" description="Acyl-[acyl-carrier-protein]--UDP-N-acetylglucosamine O-acyltransferase">
    <location>
        <begin position="1"/>
        <end position="262"/>
    </location>
</feature>
<reference key="1">
    <citation type="journal article" date="2004" name="Nat. Biotechnol.">
        <title>The genome sequence of the capnophilic rumen bacterium Mannheimia succiniciproducens.</title>
        <authorList>
            <person name="Hong S.H."/>
            <person name="Kim J.S."/>
            <person name="Lee S.Y."/>
            <person name="In Y.H."/>
            <person name="Choi S.S."/>
            <person name="Rih J.-K."/>
            <person name="Kim C.H."/>
            <person name="Jeong H."/>
            <person name="Hur C.G."/>
            <person name="Kim J.J."/>
        </authorList>
    </citation>
    <scope>NUCLEOTIDE SEQUENCE [LARGE SCALE GENOMIC DNA]</scope>
    <source>
        <strain>KCTC 0769BP / MBEL55E</strain>
    </source>
</reference>
<name>LPXA_MANSM</name>
<sequence>MIHPSAKIHPTAIVEEGAKIGENVIIGPFCLIGADVDIGKGTVLHSHIVVKGITRIGEDNQIYQFASIGEANQDLKYNGEPTKTIIGDRNRIRESVTIHRGTVQGGGVTRIGDDNLFMINSHIAHDCIIKNRCILANNATLAGHVQLDDFVIVGGMSAIHQFVVVGAHVMLGGGSMVSQDVPPYVMAQGNHARPFGVNIEGLKRRGFDKPTLHAIRNVYKLIYRSDKTLDEVLPEIEQVAQKDSSISFFVEFFKRSTRGIIR</sequence>
<gene>
    <name evidence="1" type="primary">lpxA</name>
    <name type="ordered locus">MS0461</name>
</gene>
<comment type="function">
    <text evidence="1">Involved in the biosynthesis of lipid A, a phosphorylated glycolipid that anchors the lipopolysaccharide to the outer membrane of the cell.</text>
</comment>
<comment type="catalytic activity">
    <reaction evidence="1">
        <text>a (3R)-hydroxyacyl-[ACP] + UDP-N-acetyl-alpha-D-glucosamine = a UDP-3-O-[(3R)-3-hydroxyacyl]-N-acetyl-alpha-D-glucosamine + holo-[ACP]</text>
        <dbReference type="Rhea" id="RHEA:67812"/>
        <dbReference type="Rhea" id="RHEA-COMP:9685"/>
        <dbReference type="Rhea" id="RHEA-COMP:9945"/>
        <dbReference type="ChEBI" id="CHEBI:57705"/>
        <dbReference type="ChEBI" id="CHEBI:64479"/>
        <dbReference type="ChEBI" id="CHEBI:78827"/>
        <dbReference type="ChEBI" id="CHEBI:173225"/>
        <dbReference type="EC" id="2.3.1.129"/>
    </reaction>
</comment>
<comment type="pathway">
    <text evidence="1">Glycolipid biosynthesis; lipid IV(A) biosynthesis; lipid IV(A) from (3R)-3-hydroxytetradecanoyl-[acyl-carrier-protein] and UDP-N-acetyl-alpha-D-glucosamine: step 1/6.</text>
</comment>
<comment type="subunit">
    <text evidence="1">Homotrimer.</text>
</comment>
<comment type="subcellular location">
    <subcellularLocation>
        <location evidence="1">Cytoplasm</location>
    </subcellularLocation>
</comment>
<comment type="similarity">
    <text evidence="1">Belongs to the transferase hexapeptide repeat family. LpxA subfamily.</text>
</comment>
<keyword id="KW-0012">Acyltransferase</keyword>
<keyword id="KW-0963">Cytoplasm</keyword>
<keyword id="KW-0441">Lipid A biosynthesis</keyword>
<keyword id="KW-0444">Lipid biosynthesis</keyword>
<keyword id="KW-0443">Lipid metabolism</keyword>
<keyword id="KW-0677">Repeat</keyword>
<keyword id="KW-0808">Transferase</keyword>